<feature type="chain" id="PRO_1000195083" description="Dihydroorotate dehydrogenase (quinone)">
    <location>
        <begin position="1"/>
        <end position="357"/>
    </location>
</feature>
<feature type="active site" description="Nucleophile" evidence="1">
    <location>
        <position position="179"/>
    </location>
</feature>
<feature type="binding site" evidence="1">
    <location>
        <begin position="66"/>
        <end position="70"/>
    </location>
    <ligand>
        <name>FMN</name>
        <dbReference type="ChEBI" id="CHEBI:58210"/>
    </ligand>
</feature>
<feature type="binding site" evidence="1">
    <location>
        <position position="70"/>
    </location>
    <ligand>
        <name>substrate</name>
    </ligand>
</feature>
<feature type="binding site" evidence="1">
    <location>
        <position position="90"/>
    </location>
    <ligand>
        <name>FMN</name>
        <dbReference type="ChEBI" id="CHEBI:58210"/>
    </ligand>
</feature>
<feature type="binding site" evidence="1">
    <location>
        <begin position="115"/>
        <end position="119"/>
    </location>
    <ligand>
        <name>substrate</name>
    </ligand>
</feature>
<feature type="binding site" evidence="1">
    <location>
        <position position="143"/>
    </location>
    <ligand>
        <name>FMN</name>
        <dbReference type="ChEBI" id="CHEBI:58210"/>
    </ligand>
</feature>
<feature type="binding site" evidence="1">
    <location>
        <position position="176"/>
    </location>
    <ligand>
        <name>FMN</name>
        <dbReference type="ChEBI" id="CHEBI:58210"/>
    </ligand>
</feature>
<feature type="binding site" evidence="1">
    <location>
        <position position="176"/>
    </location>
    <ligand>
        <name>substrate</name>
    </ligand>
</feature>
<feature type="binding site" evidence="1">
    <location>
        <position position="181"/>
    </location>
    <ligand>
        <name>substrate</name>
    </ligand>
</feature>
<feature type="binding site" evidence="1">
    <location>
        <position position="212"/>
    </location>
    <ligand>
        <name>FMN</name>
        <dbReference type="ChEBI" id="CHEBI:58210"/>
    </ligand>
</feature>
<feature type="binding site" evidence="1">
    <location>
        <position position="240"/>
    </location>
    <ligand>
        <name>FMN</name>
        <dbReference type="ChEBI" id="CHEBI:58210"/>
    </ligand>
</feature>
<feature type="binding site" evidence="1">
    <location>
        <begin position="241"/>
        <end position="242"/>
    </location>
    <ligand>
        <name>substrate</name>
    </ligand>
</feature>
<feature type="binding site" evidence="1">
    <location>
        <position position="264"/>
    </location>
    <ligand>
        <name>FMN</name>
        <dbReference type="ChEBI" id="CHEBI:58210"/>
    </ligand>
</feature>
<feature type="binding site" evidence="1">
    <location>
        <position position="293"/>
    </location>
    <ligand>
        <name>FMN</name>
        <dbReference type="ChEBI" id="CHEBI:58210"/>
    </ligand>
</feature>
<feature type="binding site" evidence="1">
    <location>
        <begin position="314"/>
        <end position="315"/>
    </location>
    <ligand>
        <name>FMN</name>
        <dbReference type="ChEBI" id="CHEBI:58210"/>
    </ligand>
</feature>
<evidence type="ECO:0000255" key="1">
    <source>
        <dbReference type="HAMAP-Rule" id="MF_00225"/>
    </source>
</evidence>
<comment type="function">
    <text evidence="1">Catalyzes the conversion of dihydroorotate to orotate with quinone as electron acceptor.</text>
</comment>
<comment type="catalytic activity">
    <reaction evidence="1">
        <text>(S)-dihydroorotate + a quinone = orotate + a quinol</text>
        <dbReference type="Rhea" id="RHEA:30187"/>
        <dbReference type="ChEBI" id="CHEBI:24646"/>
        <dbReference type="ChEBI" id="CHEBI:30839"/>
        <dbReference type="ChEBI" id="CHEBI:30864"/>
        <dbReference type="ChEBI" id="CHEBI:132124"/>
        <dbReference type="EC" id="1.3.5.2"/>
    </reaction>
</comment>
<comment type="cofactor">
    <cofactor evidence="1">
        <name>FMN</name>
        <dbReference type="ChEBI" id="CHEBI:58210"/>
    </cofactor>
    <text evidence="1">Binds 1 FMN per subunit.</text>
</comment>
<comment type="pathway">
    <text evidence="1">Pyrimidine metabolism; UMP biosynthesis via de novo pathway; orotate from (S)-dihydroorotate (quinone route): step 1/1.</text>
</comment>
<comment type="subunit">
    <text evidence="1">Monomer.</text>
</comment>
<comment type="subcellular location">
    <subcellularLocation>
        <location evidence="1">Cell membrane</location>
        <topology evidence="1">Peripheral membrane protein</topology>
    </subcellularLocation>
</comment>
<comment type="similarity">
    <text evidence="1">Belongs to the dihydroorotate dehydrogenase family. Type 2 subfamily.</text>
</comment>
<gene>
    <name evidence="1" type="primary">pyrD</name>
    <name type="ordered locus">JTY_2150</name>
</gene>
<organism>
    <name type="scientific">Mycobacterium bovis (strain BCG / Tokyo 172 / ATCC 35737 / TMC 1019)</name>
    <dbReference type="NCBI Taxonomy" id="561275"/>
    <lineage>
        <taxon>Bacteria</taxon>
        <taxon>Bacillati</taxon>
        <taxon>Actinomycetota</taxon>
        <taxon>Actinomycetes</taxon>
        <taxon>Mycobacteriales</taxon>
        <taxon>Mycobacteriaceae</taxon>
        <taxon>Mycobacterium</taxon>
        <taxon>Mycobacterium tuberculosis complex</taxon>
    </lineage>
</organism>
<protein>
    <recommendedName>
        <fullName evidence="1">Dihydroorotate dehydrogenase (quinone)</fullName>
        <ecNumber evidence="1">1.3.5.2</ecNumber>
    </recommendedName>
    <alternativeName>
        <fullName evidence="1">DHOdehase</fullName>
        <shortName evidence="1">DHOD</shortName>
        <shortName evidence="1">DHODase</shortName>
    </alternativeName>
    <alternativeName>
        <fullName evidence="1">Dihydroorotate oxidase</fullName>
    </alternativeName>
</protein>
<dbReference type="EC" id="1.3.5.2" evidence="1"/>
<dbReference type="EMBL" id="AP010918">
    <property type="protein sequence ID" value="BAH26434.1"/>
    <property type="molecule type" value="Genomic_DNA"/>
</dbReference>
<dbReference type="RefSeq" id="WP_011799246.1">
    <property type="nucleotide sequence ID" value="NZ_CP014566.1"/>
</dbReference>
<dbReference type="SMR" id="C1AQ55"/>
<dbReference type="KEGG" id="mbt:JTY_2150"/>
<dbReference type="HOGENOM" id="CLU_013640_2_0_11"/>
<dbReference type="UniPathway" id="UPA00070">
    <property type="reaction ID" value="UER00946"/>
</dbReference>
<dbReference type="GO" id="GO:0005737">
    <property type="term" value="C:cytoplasm"/>
    <property type="evidence" value="ECO:0007669"/>
    <property type="project" value="InterPro"/>
</dbReference>
<dbReference type="GO" id="GO:0005886">
    <property type="term" value="C:plasma membrane"/>
    <property type="evidence" value="ECO:0007669"/>
    <property type="project" value="UniProtKB-SubCell"/>
</dbReference>
<dbReference type="GO" id="GO:0106430">
    <property type="term" value="F:dihydroorotate dehydrogenase (quinone) activity"/>
    <property type="evidence" value="ECO:0007669"/>
    <property type="project" value="UniProtKB-EC"/>
</dbReference>
<dbReference type="GO" id="GO:0006207">
    <property type="term" value="P:'de novo' pyrimidine nucleobase biosynthetic process"/>
    <property type="evidence" value="ECO:0007669"/>
    <property type="project" value="InterPro"/>
</dbReference>
<dbReference type="GO" id="GO:0044205">
    <property type="term" value="P:'de novo' UMP biosynthetic process"/>
    <property type="evidence" value="ECO:0007669"/>
    <property type="project" value="UniProtKB-UniRule"/>
</dbReference>
<dbReference type="CDD" id="cd04738">
    <property type="entry name" value="DHOD_2_like"/>
    <property type="match status" value="1"/>
</dbReference>
<dbReference type="FunFam" id="3.20.20.70:FF:000123">
    <property type="entry name" value="Dihydroorotate dehydrogenase (quinone)"/>
    <property type="match status" value="1"/>
</dbReference>
<dbReference type="Gene3D" id="3.20.20.70">
    <property type="entry name" value="Aldolase class I"/>
    <property type="match status" value="1"/>
</dbReference>
<dbReference type="HAMAP" id="MF_00225">
    <property type="entry name" value="DHO_dh_type2"/>
    <property type="match status" value="1"/>
</dbReference>
<dbReference type="InterPro" id="IPR013785">
    <property type="entry name" value="Aldolase_TIM"/>
</dbReference>
<dbReference type="InterPro" id="IPR050074">
    <property type="entry name" value="DHO_dehydrogenase"/>
</dbReference>
<dbReference type="InterPro" id="IPR005719">
    <property type="entry name" value="Dihydroorotate_DH_2"/>
</dbReference>
<dbReference type="InterPro" id="IPR005720">
    <property type="entry name" value="Dihydroorotate_DH_cat"/>
</dbReference>
<dbReference type="InterPro" id="IPR001295">
    <property type="entry name" value="Dihydroorotate_DH_CS"/>
</dbReference>
<dbReference type="NCBIfam" id="NF003645">
    <property type="entry name" value="PRK05286.1-2"/>
    <property type="match status" value="1"/>
</dbReference>
<dbReference type="NCBIfam" id="NF003648">
    <property type="entry name" value="PRK05286.2-1"/>
    <property type="match status" value="1"/>
</dbReference>
<dbReference type="NCBIfam" id="NF003652">
    <property type="entry name" value="PRK05286.2-5"/>
    <property type="match status" value="1"/>
</dbReference>
<dbReference type="NCBIfam" id="TIGR01036">
    <property type="entry name" value="pyrD_sub2"/>
    <property type="match status" value="1"/>
</dbReference>
<dbReference type="PANTHER" id="PTHR48109:SF4">
    <property type="entry name" value="DIHYDROOROTATE DEHYDROGENASE (QUINONE), MITOCHONDRIAL"/>
    <property type="match status" value="1"/>
</dbReference>
<dbReference type="PANTHER" id="PTHR48109">
    <property type="entry name" value="DIHYDROOROTATE DEHYDROGENASE (QUINONE), MITOCHONDRIAL-RELATED"/>
    <property type="match status" value="1"/>
</dbReference>
<dbReference type="Pfam" id="PF01180">
    <property type="entry name" value="DHO_dh"/>
    <property type="match status" value="1"/>
</dbReference>
<dbReference type="SUPFAM" id="SSF51395">
    <property type="entry name" value="FMN-linked oxidoreductases"/>
    <property type="match status" value="1"/>
</dbReference>
<dbReference type="PROSITE" id="PS00911">
    <property type="entry name" value="DHODEHASE_1"/>
    <property type="match status" value="1"/>
</dbReference>
<dbReference type="PROSITE" id="PS00912">
    <property type="entry name" value="DHODEHASE_2"/>
    <property type="match status" value="1"/>
</dbReference>
<accession>C1AQ55</accession>
<reference key="1">
    <citation type="journal article" date="2009" name="Vaccine">
        <title>Whole genome sequence analysis of Mycobacterium bovis bacillus Calmette-Guerin (BCG) Tokyo 172: a comparative study of BCG vaccine substrains.</title>
        <authorList>
            <person name="Seki M."/>
            <person name="Honda I."/>
            <person name="Fujita I."/>
            <person name="Yano I."/>
            <person name="Yamamoto S."/>
            <person name="Koyama A."/>
        </authorList>
    </citation>
    <scope>NUCLEOTIDE SEQUENCE [LARGE SCALE GENOMIC DNA]</scope>
    <source>
        <strain>BCG / Tokyo 172 / ATCC 35737 / TMC 1019</strain>
    </source>
</reference>
<proteinExistence type="inferred from homology"/>
<keyword id="KW-1003">Cell membrane</keyword>
<keyword id="KW-0285">Flavoprotein</keyword>
<keyword id="KW-0288">FMN</keyword>
<keyword id="KW-0472">Membrane</keyword>
<keyword id="KW-0560">Oxidoreductase</keyword>
<keyword id="KW-0665">Pyrimidine biosynthesis</keyword>
<name>PYRD_MYCBT</name>
<sequence length="357" mass="37946">MYPLVRRLLFLIPPEHAHKLVFAVLRGVAAVAPVCRLLRRLLGPTDPVLASTVFGVRFPAPLGLAAGFDKDGTALSSWGAMGFGYAEIGTVTAHPQPGNPAPRLFRLADDRALLNRMGFNNHGARALAIRLARHRPEIPIGVNIGKTKKTPAGDAVNDYRASARMVGPLASYLVVNVSSPNTPGLRDLQAVESLRPILSAVRAETSTPVLVKIAPDLSDSDLDDIADLAVELDLAGIVATNTTVSRDGLTTPGVDRLGPGGISGPPLAQRAVQVLRRLYDRVGDRLALISVGGIETADDAWERITAGASLLQGYTGFIYGGERWAKDIHEGIARRLHDGGFGSLHEAVGSARRRQPS</sequence>